<gene>
    <name evidence="1" type="primary">glpK</name>
    <name type="ordered locus">XAC0358</name>
</gene>
<keyword id="KW-0067">ATP-binding</keyword>
<keyword id="KW-0319">Glycerol metabolism</keyword>
<keyword id="KW-0418">Kinase</keyword>
<keyword id="KW-0547">Nucleotide-binding</keyword>
<keyword id="KW-0808">Transferase</keyword>
<dbReference type="EC" id="2.7.1.30" evidence="1"/>
<dbReference type="EMBL" id="AE008923">
    <property type="protein sequence ID" value="AAM35250.1"/>
    <property type="status" value="ALT_INIT"/>
    <property type="molecule type" value="Genomic_DNA"/>
</dbReference>
<dbReference type="RefSeq" id="WP_003485659.1">
    <property type="nucleotide sequence ID" value="NC_003919.1"/>
</dbReference>
<dbReference type="SMR" id="Q8PQG7"/>
<dbReference type="GeneID" id="66909572"/>
<dbReference type="KEGG" id="xac:XAC0358"/>
<dbReference type="eggNOG" id="COG0554">
    <property type="taxonomic scope" value="Bacteria"/>
</dbReference>
<dbReference type="HOGENOM" id="CLU_009281_2_3_6"/>
<dbReference type="UniPathway" id="UPA00618">
    <property type="reaction ID" value="UER00672"/>
</dbReference>
<dbReference type="Proteomes" id="UP000000576">
    <property type="component" value="Chromosome"/>
</dbReference>
<dbReference type="GO" id="GO:0005829">
    <property type="term" value="C:cytosol"/>
    <property type="evidence" value="ECO:0007669"/>
    <property type="project" value="TreeGrafter"/>
</dbReference>
<dbReference type="GO" id="GO:0005524">
    <property type="term" value="F:ATP binding"/>
    <property type="evidence" value="ECO:0007669"/>
    <property type="project" value="UniProtKB-UniRule"/>
</dbReference>
<dbReference type="GO" id="GO:0004370">
    <property type="term" value="F:glycerol kinase activity"/>
    <property type="evidence" value="ECO:0000250"/>
    <property type="project" value="UniProtKB"/>
</dbReference>
<dbReference type="GO" id="GO:0019563">
    <property type="term" value="P:glycerol catabolic process"/>
    <property type="evidence" value="ECO:0007669"/>
    <property type="project" value="UniProtKB-UniRule"/>
</dbReference>
<dbReference type="GO" id="GO:0006071">
    <property type="term" value="P:glycerol metabolic process"/>
    <property type="evidence" value="ECO:0000250"/>
    <property type="project" value="UniProtKB"/>
</dbReference>
<dbReference type="GO" id="GO:0006072">
    <property type="term" value="P:glycerol-3-phosphate metabolic process"/>
    <property type="evidence" value="ECO:0007669"/>
    <property type="project" value="InterPro"/>
</dbReference>
<dbReference type="CDD" id="cd07786">
    <property type="entry name" value="FGGY_EcGK_like"/>
    <property type="match status" value="1"/>
</dbReference>
<dbReference type="FunFam" id="3.30.420.40:FF:000007">
    <property type="entry name" value="Glycerol kinase"/>
    <property type="match status" value="1"/>
</dbReference>
<dbReference type="FunFam" id="3.30.420.40:FF:000008">
    <property type="entry name" value="Glycerol kinase"/>
    <property type="match status" value="1"/>
</dbReference>
<dbReference type="Gene3D" id="3.30.420.40">
    <property type="match status" value="2"/>
</dbReference>
<dbReference type="HAMAP" id="MF_00186">
    <property type="entry name" value="Glycerol_kin"/>
    <property type="match status" value="1"/>
</dbReference>
<dbReference type="InterPro" id="IPR043129">
    <property type="entry name" value="ATPase_NBD"/>
</dbReference>
<dbReference type="InterPro" id="IPR000577">
    <property type="entry name" value="Carb_kinase_FGGY"/>
</dbReference>
<dbReference type="InterPro" id="IPR018483">
    <property type="entry name" value="Carb_kinase_FGGY_CS"/>
</dbReference>
<dbReference type="InterPro" id="IPR018485">
    <property type="entry name" value="FGGY_C"/>
</dbReference>
<dbReference type="InterPro" id="IPR018484">
    <property type="entry name" value="FGGY_N"/>
</dbReference>
<dbReference type="InterPro" id="IPR005999">
    <property type="entry name" value="Glycerol_kin"/>
</dbReference>
<dbReference type="NCBIfam" id="TIGR01311">
    <property type="entry name" value="glycerol_kin"/>
    <property type="match status" value="1"/>
</dbReference>
<dbReference type="NCBIfam" id="NF000756">
    <property type="entry name" value="PRK00047.1"/>
    <property type="match status" value="1"/>
</dbReference>
<dbReference type="PANTHER" id="PTHR10196:SF69">
    <property type="entry name" value="GLYCEROL KINASE"/>
    <property type="match status" value="1"/>
</dbReference>
<dbReference type="PANTHER" id="PTHR10196">
    <property type="entry name" value="SUGAR KINASE"/>
    <property type="match status" value="1"/>
</dbReference>
<dbReference type="Pfam" id="PF02782">
    <property type="entry name" value="FGGY_C"/>
    <property type="match status" value="1"/>
</dbReference>
<dbReference type="Pfam" id="PF00370">
    <property type="entry name" value="FGGY_N"/>
    <property type="match status" value="1"/>
</dbReference>
<dbReference type="PIRSF" id="PIRSF000538">
    <property type="entry name" value="GlpK"/>
    <property type="match status" value="1"/>
</dbReference>
<dbReference type="SUPFAM" id="SSF53067">
    <property type="entry name" value="Actin-like ATPase domain"/>
    <property type="match status" value="2"/>
</dbReference>
<dbReference type="PROSITE" id="PS00933">
    <property type="entry name" value="FGGY_KINASES_1"/>
    <property type="match status" value="1"/>
</dbReference>
<dbReference type="PROSITE" id="PS00445">
    <property type="entry name" value="FGGY_KINASES_2"/>
    <property type="match status" value="1"/>
</dbReference>
<evidence type="ECO:0000255" key="1">
    <source>
        <dbReference type="HAMAP-Rule" id="MF_00186"/>
    </source>
</evidence>
<evidence type="ECO:0000305" key="2"/>
<comment type="function">
    <text evidence="1">Key enzyme in the regulation of glycerol uptake and metabolism. Catalyzes the phosphorylation of glycerol to yield sn-glycerol 3-phosphate.</text>
</comment>
<comment type="catalytic activity">
    <reaction evidence="1">
        <text>glycerol + ATP = sn-glycerol 3-phosphate + ADP + H(+)</text>
        <dbReference type="Rhea" id="RHEA:21644"/>
        <dbReference type="ChEBI" id="CHEBI:15378"/>
        <dbReference type="ChEBI" id="CHEBI:17754"/>
        <dbReference type="ChEBI" id="CHEBI:30616"/>
        <dbReference type="ChEBI" id="CHEBI:57597"/>
        <dbReference type="ChEBI" id="CHEBI:456216"/>
        <dbReference type="EC" id="2.7.1.30"/>
    </reaction>
</comment>
<comment type="activity regulation">
    <text evidence="1">Inhibited by fructose 1,6-bisphosphate (FBP).</text>
</comment>
<comment type="pathway">
    <text evidence="1">Polyol metabolism; glycerol degradation via glycerol kinase pathway; sn-glycerol 3-phosphate from glycerol: step 1/1.</text>
</comment>
<comment type="similarity">
    <text evidence="1">Belongs to the FGGY kinase family.</text>
</comment>
<comment type="sequence caution" evidence="2">
    <conflict type="erroneous initiation">
        <sequence resource="EMBL-CDS" id="AAM35250"/>
    </conflict>
    <text>Extended N-terminus.</text>
</comment>
<protein>
    <recommendedName>
        <fullName evidence="1">Glycerol kinase</fullName>
        <ecNumber evidence="1">2.7.1.30</ecNumber>
    </recommendedName>
    <alternativeName>
        <fullName evidence="1">ATP:glycerol 3-phosphotransferase</fullName>
    </alternativeName>
    <alternativeName>
        <fullName evidence="1">Glycerokinase</fullName>
        <shortName evidence="1">GK</shortName>
    </alternativeName>
</protein>
<name>GLPK_XANAC</name>
<organism>
    <name type="scientific">Xanthomonas axonopodis pv. citri (strain 306)</name>
    <dbReference type="NCBI Taxonomy" id="190486"/>
    <lineage>
        <taxon>Bacteria</taxon>
        <taxon>Pseudomonadati</taxon>
        <taxon>Pseudomonadota</taxon>
        <taxon>Gammaproteobacteria</taxon>
        <taxon>Lysobacterales</taxon>
        <taxon>Lysobacteraceae</taxon>
        <taxon>Xanthomonas</taxon>
    </lineage>
</organism>
<accession>Q8PQG7</accession>
<reference key="1">
    <citation type="journal article" date="2002" name="Nature">
        <title>Comparison of the genomes of two Xanthomonas pathogens with differing host specificities.</title>
        <authorList>
            <person name="da Silva A.C.R."/>
            <person name="Ferro J.A."/>
            <person name="Reinach F.C."/>
            <person name="Farah C.S."/>
            <person name="Furlan L.R."/>
            <person name="Quaggio R.B."/>
            <person name="Monteiro-Vitorello C.B."/>
            <person name="Van Sluys M.A."/>
            <person name="Almeida N.F. Jr."/>
            <person name="Alves L.M.C."/>
            <person name="do Amaral A.M."/>
            <person name="Bertolini M.C."/>
            <person name="Camargo L.E.A."/>
            <person name="Camarotte G."/>
            <person name="Cannavan F."/>
            <person name="Cardozo J."/>
            <person name="Chambergo F."/>
            <person name="Ciapina L.P."/>
            <person name="Cicarelli R.M.B."/>
            <person name="Coutinho L.L."/>
            <person name="Cursino-Santos J.R."/>
            <person name="El-Dorry H."/>
            <person name="Faria J.B."/>
            <person name="Ferreira A.J.S."/>
            <person name="Ferreira R.C.C."/>
            <person name="Ferro M.I.T."/>
            <person name="Formighieri E.F."/>
            <person name="Franco M.C."/>
            <person name="Greggio C.C."/>
            <person name="Gruber A."/>
            <person name="Katsuyama A.M."/>
            <person name="Kishi L.T."/>
            <person name="Leite R.P."/>
            <person name="Lemos E.G.M."/>
            <person name="Lemos M.V.F."/>
            <person name="Locali E.C."/>
            <person name="Machado M.A."/>
            <person name="Madeira A.M.B.N."/>
            <person name="Martinez-Rossi N.M."/>
            <person name="Martins E.C."/>
            <person name="Meidanis J."/>
            <person name="Menck C.F.M."/>
            <person name="Miyaki C.Y."/>
            <person name="Moon D.H."/>
            <person name="Moreira L.M."/>
            <person name="Novo M.T.M."/>
            <person name="Okura V.K."/>
            <person name="Oliveira M.C."/>
            <person name="Oliveira V.R."/>
            <person name="Pereira H.A."/>
            <person name="Rossi A."/>
            <person name="Sena J.A.D."/>
            <person name="Silva C."/>
            <person name="de Souza R.F."/>
            <person name="Spinola L.A.F."/>
            <person name="Takita M.A."/>
            <person name="Tamura R.E."/>
            <person name="Teixeira E.C."/>
            <person name="Tezza R.I.D."/>
            <person name="Trindade dos Santos M."/>
            <person name="Truffi D."/>
            <person name="Tsai S.M."/>
            <person name="White F.F."/>
            <person name="Setubal J.C."/>
            <person name="Kitajima J.P."/>
        </authorList>
    </citation>
    <scope>NUCLEOTIDE SEQUENCE [LARGE SCALE GENOMIC DNA]</scope>
    <source>
        <strain>306</strain>
    </source>
</reference>
<sequence>MEKQYVLAIDQGTTSSRAMLFDRQGKVAGVAQREFGQIFPQPGWVEHNPREIMTSVYTTITELLNNAQIDARAIAGIGITNQRETAVVWDKATGQPIYNAIVWQSRQTKDICAQLKEAGHEQMVRDKTGLLIDAYFSGTKVKWILDHVEGARERAQKGELAFGTIDSWLIWNLTGGKVHVTDYTNASRTMMFNIHTLQWDAELLAMLDVPAQMLPEVRSSSEVYGMTQTQYFYGEQVPIAGIAGDQQAALFGQACFEPGMAKNTYGTGCFMLMNTGDKAVASKAGLLTTIAWGIDGKVEYALEGAIFVAGSVVQWLRDGLRMLGKASDSQAYAERAGDNDGVYIVPAFVGLGAPYWRSDIRGAVFGLTRGTTKEHFVRAAVESMAYQTRDVLTAMQSDSGIELKELRADGGAIANDFMAQFQSDILNVPVLRPEVAETTALGAAYLAGLATGFWSSREEIAKQWAVDRRFEPAMADDKRQALYAGWQQAVEATMGFRIS</sequence>
<proteinExistence type="inferred from homology"/>
<feature type="chain" id="PRO_0000059522" description="Glycerol kinase">
    <location>
        <begin position="1"/>
        <end position="499"/>
    </location>
</feature>
<feature type="binding site" evidence="1">
    <location>
        <position position="13"/>
    </location>
    <ligand>
        <name>ADP</name>
        <dbReference type="ChEBI" id="CHEBI:456216"/>
    </ligand>
</feature>
<feature type="binding site" evidence="1">
    <location>
        <position position="13"/>
    </location>
    <ligand>
        <name>ATP</name>
        <dbReference type="ChEBI" id="CHEBI:30616"/>
    </ligand>
</feature>
<feature type="binding site" evidence="1">
    <location>
        <position position="13"/>
    </location>
    <ligand>
        <name>sn-glycerol 3-phosphate</name>
        <dbReference type="ChEBI" id="CHEBI:57597"/>
    </ligand>
</feature>
<feature type="binding site" evidence="1">
    <location>
        <position position="14"/>
    </location>
    <ligand>
        <name>ATP</name>
        <dbReference type="ChEBI" id="CHEBI:30616"/>
    </ligand>
</feature>
<feature type="binding site" evidence="1">
    <location>
        <position position="15"/>
    </location>
    <ligand>
        <name>ATP</name>
        <dbReference type="ChEBI" id="CHEBI:30616"/>
    </ligand>
</feature>
<feature type="binding site" evidence="1">
    <location>
        <position position="17"/>
    </location>
    <ligand>
        <name>ADP</name>
        <dbReference type="ChEBI" id="CHEBI:456216"/>
    </ligand>
</feature>
<feature type="binding site" evidence="1">
    <location>
        <position position="83"/>
    </location>
    <ligand>
        <name>glycerol</name>
        <dbReference type="ChEBI" id="CHEBI:17754"/>
    </ligand>
</feature>
<feature type="binding site" evidence="1">
    <location>
        <position position="83"/>
    </location>
    <ligand>
        <name>sn-glycerol 3-phosphate</name>
        <dbReference type="ChEBI" id="CHEBI:57597"/>
    </ligand>
</feature>
<feature type="binding site" evidence="1">
    <location>
        <position position="84"/>
    </location>
    <ligand>
        <name>glycerol</name>
        <dbReference type="ChEBI" id="CHEBI:17754"/>
    </ligand>
</feature>
<feature type="binding site" evidence="1">
    <location>
        <position position="84"/>
    </location>
    <ligand>
        <name>sn-glycerol 3-phosphate</name>
        <dbReference type="ChEBI" id="CHEBI:57597"/>
    </ligand>
</feature>
<feature type="binding site" evidence="1">
    <location>
        <position position="135"/>
    </location>
    <ligand>
        <name>glycerol</name>
        <dbReference type="ChEBI" id="CHEBI:17754"/>
    </ligand>
</feature>
<feature type="binding site" evidence="1">
    <location>
        <position position="135"/>
    </location>
    <ligand>
        <name>sn-glycerol 3-phosphate</name>
        <dbReference type="ChEBI" id="CHEBI:57597"/>
    </ligand>
</feature>
<feature type="binding site" evidence="1">
    <location>
        <position position="245"/>
    </location>
    <ligand>
        <name>glycerol</name>
        <dbReference type="ChEBI" id="CHEBI:17754"/>
    </ligand>
</feature>
<feature type="binding site" evidence="1">
    <location>
        <position position="245"/>
    </location>
    <ligand>
        <name>sn-glycerol 3-phosphate</name>
        <dbReference type="ChEBI" id="CHEBI:57597"/>
    </ligand>
</feature>
<feature type="binding site" evidence="1">
    <location>
        <position position="246"/>
    </location>
    <ligand>
        <name>glycerol</name>
        <dbReference type="ChEBI" id="CHEBI:17754"/>
    </ligand>
</feature>
<feature type="binding site" evidence="1">
    <location>
        <position position="267"/>
    </location>
    <ligand>
        <name>ADP</name>
        <dbReference type="ChEBI" id="CHEBI:456216"/>
    </ligand>
</feature>
<feature type="binding site" evidence="1">
    <location>
        <position position="267"/>
    </location>
    <ligand>
        <name>ATP</name>
        <dbReference type="ChEBI" id="CHEBI:30616"/>
    </ligand>
</feature>
<feature type="binding site" evidence="1">
    <location>
        <position position="310"/>
    </location>
    <ligand>
        <name>ADP</name>
        <dbReference type="ChEBI" id="CHEBI:456216"/>
    </ligand>
</feature>
<feature type="binding site" evidence="1">
    <location>
        <position position="310"/>
    </location>
    <ligand>
        <name>ATP</name>
        <dbReference type="ChEBI" id="CHEBI:30616"/>
    </ligand>
</feature>
<feature type="binding site" evidence="1">
    <location>
        <position position="314"/>
    </location>
    <ligand>
        <name>ATP</name>
        <dbReference type="ChEBI" id="CHEBI:30616"/>
    </ligand>
</feature>
<feature type="binding site" evidence="1">
    <location>
        <position position="411"/>
    </location>
    <ligand>
        <name>ADP</name>
        <dbReference type="ChEBI" id="CHEBI:456216"/>
    </ligand>
</feature>
<feature type="binding site" evidence="1">
    <location>
        <position position="411"/>
    </location>
    <ligand>
        <name>ATP</name>
        <dbReference type="ChEBI" id="CHEBI:30616"/>
    </ligand>
</feature>
<feature type="binding site" evidence="1">
    <location>
        <position position="415"/>
    </location>
    <ligand>
        <name>ADP</name>
        <dbReference type="ChEBI" id="CHEBI:456216"/>
    </ligand>
</feature>